<name>PHNX_BACMK</name>
<dbReference type="EC" id="3.11.1.1" evidence="1"/>
<dbReference type="EMBL" id="CP000903">
    <property type="protein sequence ID" value="ABY42487.1"/>
    <property type="molecule type" value="Genomic_DNA"/>
</dbReference>
<dbReference type="RefSeq" id="WP_012260588.1">
    <property type="nucleotide sequence ID" value="NC_010184.1"/>
</dbReference>
<dbReference type="SMR" id="A9VKQ2"/>
<dbReference type="KEGG" id="bwe:BcerKBAB4_1240"/>
<dbReference type="eggNOG" id="COG0637">
    <property type="taxonomic scope" value="Bacteria"/>
</dbReference>
<dbReference type="HOGENOM" id="CLU_045011_12_0_9"/>
<dbReference type="Proteomes" id="UP000002154">
    <property type="component" value="Chromosome"/>
</dbReference>
<dbReference type="GO" id="GO:0005829">
    <property type="term" value="C:cytosol"/>
    <property type="evidence" value="ECO:0007669"/>
    <property type="project" value="TreeGrafter"/>
</dbReference>
<dbReference type="GO" id="GO:0000287">
    <property type="term" value="F:magnesium ion binding"/>
    <property type="evidence" value="ECO:0007669"/>
    <property type="project" value="UniProtKB-UniRule"/>
</dbReference>
<dbReference type="GO" id="GO:0008967">
    <property type="term" value="F:phosphoglycolate phosphatase activity"/>
    <property type="evidence" value="ECO:0007669"/>
    <property type="project" value="TreeGrafter"/>
</dbReference>
<dbReference type="GO" id="GO:0050194">
    <property type="term" value="F:phosphonoacetaldehyde hydrolase activity"/>
    <property type="evidence" value="ECO:0007669"/>
    <property type="project" value="UniProtKB-UniRule"/>
</dbReference>
<dbReference type="GO" id="GO:0006281">
    <property type="term" value="P:DNA repair"/>
    <property type="evidence" value="ECO:0007669"/>
    <property type="project" value="TreeGrafter"/>
</dbReference>
<dbReference type="GO" id="GO:0019700">
    <property type="term" value="P:organic phosphonate catabolic process"/>
    <property type="evidence" value="ECO:0007669"/>
    <property type="project" value="InterPro"/>
</dbReference>
<dbReference type="CDD" id="cd02586">
    <property type="entry name" value="HAD_PHN"/>
    <property type="match status" value="1"/>
</dbReference>
<dbReference type="FunFam" id="1.10.150.240:FF:000006">
    <property type="entry name" value="Phosphonoacetaldehyde hydrolase"/>
    <property type="match status" value="1"/>
</dbReference>
<dbReference type="FunFam" id="3.40.50.1000:FF:000072">
    <property type="entry name" value="Phosphonoacetaldehyde hydrolase"/>
    <property type="match status" value="1"/>
</dbReference>
<dbReference type="Gene3D" id="3.40.50.1000">
    <property type="entry name" value="HAD superfamily/HAD-like"/>
    <property type="match status" value="1"/>
</dbReference>
<dbReference type="Gene3D" id="1.10.150.240">
    <property type="entry name" value="Putative phosphatase, domain 2"/>
    <property type="match status" value="1"/>
</dbReference>
<dbReference type="HAMAP" id="MF_01375">
    <property type="entry name" value="PhnX"/>
    <property type="match status" value="1"/>
</dbReference>
<dbReference type="InterPro" id="IPR050155">
    <property type="entry name" value="HAD-like_hydrolase_sf"/>
</dbReference>
<dbReference type="InterPro" id="IPR036412">
    <property type="entry name" value="HAD-like_sf"/>
</dbReference>
<dbReference type="InterPro" id="IPR006439">
    <property type="entry name" value="HAD-SF_hydro_IA"/>
</dbReference>
<dbReference type="InterPro" id="IPR023214">
    <property type="entry name" value="HAD_sf"/>
</dbReference>
<dbReference type="InterPro" id="IPR023198">
    <property type="entry name" value="PGP-like_dom2"/>
</dbReference>
<dbReference type="InterPro" id="IPR006323">
    <property type="entry name" value="Phosphonoacetald_hydro"/>
</dbReference>
<dbReference type="NCBIfam" id="TIGR01549">
    <property type="entry name" value="HAD-SF-IA-v1"/>
    <property type="match status" value="1"/>
</dbReference>
<dbReference type="NCBIfam" id="TIGR01422">
    <property type="entry name" value="phosphonatase"/>
    <property type="match status" value="1"/>
</dbReference>
<dbReference type="PANTHER" id="PTHR43434">
    <property type="entry name" value="PHOSPHOGLYCOLATE PHOSPHATASE"/>
    <property type="match status" value="1"/>
</dbReference>
<dbReference type="PANTHER" id="PTHR43434:SF19">
    <property type="entry name" value="PHOSPHONOACETALDEHYDE HYDROLASE"/>
    <property type="match status" value="1"/>
</dbReference>
<dbReference type="Pfam" id="PF00702">
    <property type="entry name" value="Hydrolase"/>
    <property type="match status" value="1"/>
</dbReference>
<dbReference type="SFLD" id="SFLDG01129">
    <property type="entry name" value="C1.5:_HAD__Beta-PGM__Phosphata"/>
    <property type="match status" value="1"/>
</dbReference>
<dbReference type="SFLD" id="SFLDF00038">
    <property type="entry name" value="phosphonoacetaldehyde_hydrolas"/>
    <property type="match status" value="1"/>
</dbReference>
<dbReference type="SUPFAM" id="SSF56784">
    <property type="entry name" value="HAD-like"/>
    <property type="match status" value="1"/>
</dbReference>
<evidence type="ECO:0000255" key="1">
    <source>
        <dbReference type="HAMAP-Rule" id="MF_01375"/>
    </source>
</evidence>
<gene>
    <name evidence="1" type="primary">phnX</name>
    <name type="ordered locus">BcerKBAB4_1240</name>
</gene>
<keyword id="KW-0378">Hydrolase</keyword>
<keyword id="KW-0460">Magnesium</keyword>
<keyword id="KW-0479">Metal-binding</keyword>
<keyword id="KW-0704">Schiff base</keyword>
<organism>
    <name type="scientific">Bacillus mycoides (strain KBAB4)</name>
    <name type="common">Bacillus weihenstephanensis</name>
    <dbReference type="NCBI Taxonomy" id="315730"/>
    <lineage>
        <taxon>Bacteria</taxon>
        <taxon>Bacillati</taxon>
        <taxon>Bacillota</taxon>
        <taxon>Bacilli</taxon>
        <taxon>Bacillales</taxon>
        <taxon>Bacillaceae</taxon>
        <taxon>Bacillus</taxon>
        <taxon>Bacillus cereus group</taxon>
    </lineage>
</organism>
<sequence length="264" mass="30339">MKIEAVVFDWAGTTVDYGCFAPLEVFMKIFHKRGVEITAEEARKPMGLLKIDHIRVLTEMPRISNEWKHVFGQLPTEEDIHEMYEEFEEILFAILPYYATPIDGVKEVVSSLRERGIKIGSTTGYTREMMDIVAKEAEIQGYKPDFLVTPNDVPAGRPYPWMCYKNAMELCVYPMNHMIKIGDTVSDMKEGRNAGMWTVGVILGSSELGLTEEEVENMDPLELREKIEVVRNRFIENGAHFTIETMQELENVIEHIEKQELIIS</sequence>
<feature type="chain" id="PRO_1000144830" description="Phosphonoacetaldehyde hydrolase">
    <location>
        <begin position="1"/>
        <end position="264"/>
    </location>
</feature>
<feature type="active site" description="Nucleophile" evidence="1">
    <location>
        <position position="9"/>
    </location>
</feature>
<feature type="active site" description="Schiff-base intermediate with substrate" evidence="1">
    <location>
        <position position="50"/>
    </location>
</feature>
<feature type="binding site" evidence="1">
    <location>
        <position position="9"/>
    </location>
    <ligand>
        <name>Mg(2+)</name>
        <dbReference type="ChEBI" id="CHEBI:18420"/>
    </ligand>
</feature>
<feature type="binding site" evidence="1">
    <location>
        <position position="11"/>
    </location>
    <ligand>
        <name>Mg(2+)</name>
        <dbReference type="ChEBI" id="CHEBI:18420"/>
    </ligand>
</feature>
<feature type="binding site" evidence="1">
    <location>
        <position position="183"/>
    </location>
    <ligand>
        <name>Mg(2+)</name>
        <dbReference type="ChEBI" id="CHEBI:18420"/>
    </ligand>
</feature>
<comment type="function">
    <text evidence="1">Involved in phosphonate degradation.</text>
</comment>
<comment type="catalytic activity">
    <reaction evidence="1">
        <text>phosphonoacetaldehyde + H2O = acetaldehyde + phosphate + H(+)</text>
        <dbReference type="Rhea" id="RHEA:18905"/>
        <dbReference type="ChEBI" id="CHEBI:15343"/>
        <dbReference type="ChEBI" id="CHEBI:15377"/>
        <dbReference type="ChEBI" id="CHEBI:15378"/>
        <dbReference type="ChEBI" id="CHEBI:43474"/>
        <dbReference type="ChEBI" id="CHEBI:58383"/>
        <dbReference type="EC" id="3.11.1.1"/>
    </reaction>
</comment>
<comment type="cofactor">
    <cofactor evidence="1">
        <name>Mg(2+)</name>
        <dbReference type="ChEBI" id="CHEBI:18420"/>
    </cofactor>
    <text evidence="1">Binds 1 Mg(2+) ion per subunit.</text>
</comment>
<comment type="subunit">
    <text evidence="1">Homodimer.</text>
</comment>
<comment type="similarity">
    <text evidence="1">Belongs to the HAD-like hydrolase superfamily. PhnX family.</text>
</comment>
<proteinExistence type="inferred from homology"/>
<reference key="1">
    <citation type="journal article" date="2008" name="Chem. Biol. Interact.">
        <title>Extending the Bacillus cereus group genomics to putative food-borne pathogens of different toxicity.</title>
        <authorList>
            <person name="Lapidus A."/>
            <person name="Goltsman E."/>
            <person name="Auger S."/>
            <person name="Galleron N."/>
            <person name="Segurens B."/>
            <person name="Dossat C."/>
            <person name="Land M.L."/>
            <person name="Broussolle V."/>
            <person name="Brillard J."/>
            <person name="Guinebretiere M.-H."/>
            <person name="Sanchis V."/>
            <person name="Nguen-the C."/>
            <person name="Lereclus D."/>
            <person name="Richardson P."/>
            <person name="Wincker P."/>
            <person name="Weissenbach J."/>
            <person name="Ehrlich S.D."/>
            <person name="Sorokin A."/>
        </authorList>
    </citation>
    <scope>NUCLEOTIDE SEQUENCE [LARGE SCALE GENOMIC DNA]</scope>
    <source>
        <strain>KBAB4</strain>
    </source>
</reference>
<protein>
    <recommendedName>
        <fullName evidence="1">Phosphonoacetaldehyde hydrolase</fullName>
        <shortName evidence="1">Phosphonatase</shortName>
        <ecNumber evidence="1">3.11.1.1</ecNumber>
    </recommendedName>
    <alternativeName>
        <fullName evidence="1">Phosphonoacetaldehyde phosphonohydrolase</fullName>
    </alternativeName>
</protein>
<accession>A9VKQ2</accession>